<name>DLTC_BACC3</name>
<reference key="1">
    <citation type="submission" date="2009-02" db="EMBL/GenBank/DDBJ databases">
        <title>Genome sequence of Bacillus cereus 03BB102.</title>
        <authorList>
            <person name="Dodson R.J."/>
            <person name="Jackson P."/>
            <person name="Munk A.C."/>
            <person name="Brettin T."/>
            <person name="Bruce D."/>
            <person name="Detter C."/>
            <person name="Tapia R."/>
            <person name="Han C."/>
            <person name="Sutton G."/>
            <person name="Sims D."/>
        </authorList>
    </citation>
    <scope>NUCLEOTIDE SEQUENCE [LARGE SCALE GENOMIC DNA]</scope>
    <source>
        <strain>03BB102</strain>
    </source>
</reference>
<organism>
    <name type="scientific">Bacillus cereus (strain 03BB102)</name>
    <dbReference type="NCBI Taxonomy" id="572264"/>
    <lineage>
        <taxon>Bacteria</taxon>
        <taxon>Bacillati</taxon>
        <taxon>Bacillota</taxon>
        <taxon>Bacilli</taxon>
        <taxon>Bacillales</taxon>
        <taxon>Bacillaceae</taxon>
        <taxon>Bacillus</taxon>
        <taxon>Bacillus cereus group</taxon>
    </lineage>
</organism>
<accession>C1EM78</accession>
<gene>
    <name evidence="1" type="primary">dltC</name>
    <name type="ordered locus">BCA_1424</name>
</gene>
<protein>
    <recommendedName>
        <fullName evidence="1">D-alanyl carrier protein</fullName>
        <shortName evidence="1">DCP</shortName>
    </recommendedName>
    <alternativeName>
        <fullName evidence="1">D-alanine--poly(phosphoribitol) ligase subunit 2</fullName>
    </alternativeName>
</protein>
<evidence type="ECO:0000255" key="1">
    <source>
        <dbReference type="HAMAP-Rule" id="MF_00565"/>
    </source>
</evidence>
<feature type="chain" id="PRO_1000146792" description="D-alanyl carrier protein">
    <location>
        <begin position="1"/>
        <end position="79"/>
    </location>
</feature>
<feature type="domain" description="Carrier" evidence="1">
    <location>
        <begin position="2"/>
        <end position="79"/>
    </location>
</feature>
<feature type="modified residue" description="O-(pantetheine 4'-phosphoryl)serine" evidence="1">
    <location>
        <position position="37"/>
    </location>
</feature>
<comment type="function">
    <text evidence="1">Carrier protein involved in the D-alanylation of lipoteichoic acid (LTA). The loading of thioester-linked D-alanine onto DltC is catalyzed by D-alanine--D-alanyl carrier protein ligase DltA. The DltC-carried D-alanyl group is further transferred to cell membrane phosphatidylglycerol (PG) by forming an ester bond, probably catalyzed by DltD. D-alanylation of LTA plays an important role in modulating the properties of the cell wall in Gram-positive bacteria, influencing the net charge of the cell wall.</text>
</comment>
<comment type="pathway">
    <text evidence="1">Cell wall biogenesis; lipoteichoic acid biosynthesis.</text>
</comment>
<comment type="subcellular location">
    <subcellularLocation>
        <location evidence="1">Cytoplasm</location>
    </subcellularLocation>
</comment>
<comment type="PTM">
    <text evidence="1">4'-phosphopantetheine is transferred from CoA to a specific serine of apo-DCP.</text>
</comment>
<comment type="similarity">
    <text evidence="1">Belongs to the DltC family.</text>
</comment>
<dbReference type="EMBL" id="CP001407">
    <property type="protein sequence ID" value="ACO30963.1"/>
    <property type="molecule type" value="Genomic_DNA"/>
</dbReference>
<dbReference type="RefSeq" id="WP_000807310.1">
    <property type="nucleotide sequence ID" value="NZ_CP009318.1"/>
</dbReference>
<dbReference type="SMR" id="C1EM78"/>
<dbReference type="GeneID" id="93009671"/>
<dbReference type="KEGG" id="bcx:BCA_1424"/>
<dbReference type="PATRIC" id="fig|572264.18.peg.1374"/>
<dbReference type="UniPathway" id="UPA00556"/>
<dbReference type="Proteomes" id="UP000002210">
    <property type="component" value="Chromosome"/>
</dbReference>
<dbReference type="GO" id="GO:0005737">
    <property type="term" value="C:cytoplasm"/>
    <property type="evidence" value="ECO:0007669"/>
    <property type="project" value="UniProtKB-SubCell"/>
</dbReference>
<dbReference type="GO" id="GO:0036370">
    <property type="term" value="F:D-alanyl carrier activity"/>
    <property type="evidence" value="ECO:0007669"/>
    <property type="project" value="UniProtKB-UniRule"/>
</dbReference>
<dbReference type="GO" id="GO:0071555">
    <property type="term" value="P:cell wall organization"/>
    <property type="evidence" value="ECO:0007669"/>
    <property type="project" value="UniProtKB-KW"/>
</dbReference>
<dbReference type="GO" id="GO:0070395">
    <property type="term" value="P:lipoteichoic acid biosynthetic process"/>
    <property type="evidence" value="ECO:0007669"/>
    <property type="project" value="UniProtKB-UniRule"/>
</dbReference>
<dbReference type="FunFam" id="1.10.1200.10:FF:000004">
    <property type="entry name" value="D-alanyl carrier protein"/>
    <property type="match status" value="1"/>
</dbReference>
<dbReference type="Gene3D" id="1.10.1200.10">
    <property type="entry name" value="ACP-like"/>
    <property type="match status" value="1"/>
</dbReference>
<dbReference type="HAMAP" id="MF_00565">
    <property type="entry name" value="DltC"/>
    <property type="match status" value="1"/>
</dbReference>
<dbReference type="InterPro" id="IPR036736">
    <property type="entry name" value="ACP-like_sf"/>
</dbReference>
<dbReference type="InterPro" id="IPR003230">
    <property type="entry name" value="DltC"/>
</dbReference>
<dbReference type="InterPro" id="IPR009081">
    <property type="entry name" value="PP-bd_ACP"/>
</dbReference>
<dbReference type="NCBIfam" id="TIGR01688">
    <property type="entry name" value="dltC"/>
    <property type="match status" value="1"/>
</dbReference>
<dbReference type="NCBIfam" id="NF003464">
    <property type="entry name" value="PRK05087.1"/>
    <property type="match status" value="1"/>
</dbReference>
<dbReference type="Pfam" id="PF00550">
    <property type="entry name" value="PP-binding"/>
    <property type="match status" value="1"/>
</dbReference>
<dbReference type="SUPFAM" id="SSF47336">
    <property type="entry name" value="ACP-like"/>
    <property type="match status" value="1"/>
</dbReference>
<dbReference type="PROSITE" id="PS50075">
    <property type="entry name" value="CARRIER"/>
    <property type="match status" value="1"/>
</dbReference>
<sequence>MAEFKEQVLDILEEVCENDIVKENLDVQLFEEGILDSFAVVSLLVEFQERLDIEVSISDFDRDEWATPNMVIKKLEEIR</sequence>
<proteinExistence type="inferred from homology"/>
<keyword id="KW-0961">Cell wall biogenesis/degradation</keyword>
<keyword id="KW-0963">Cytoplasm</keyword>
<keyword id="KW-0596">Phosphopantetheine</keyword>
<keyword id="KW-0597">Phosphoprotein</keyword>